<gene>
    <name type="ordered locus">AF_1052</name>
</gene>
<accession>O29210</accession>
<name>Y1052_ARCFU</name>
<proteinExistence type="inferred from homology"/>
<dbReference type="EMBL" id="AE000782">
    <property type="protein sequence ID" value="AAB90193.1"/>
    <property type="molecule type" value="Genomic_DNA"/>
</dbReference>
<dbReference type="PIR" id="D69381">
    <property type="entry name" value="D69381"/>
</dbReference>
<dbReference type="RefSeq" id="WP_010878552.1">
    <property type="nucleotide sequence ID" value="NC_000917.1"/>
</dbReference>
<dbReference type="SMR" id="O29210"/>
<dbReference type="STRING" id="224325.AF_1052"/>
<dbReference type="PaxDb" id="224325-AF_1052"/>
<dbReference type="EnsemblBacteria" id="AAB90193">
    <property type="protein sequence ID" value="AAB90193"/>
    <property type="gene ID" value="AF_1052"/>
</dbReference>
<dbReference type="GeneID" id="1484275"/>
<dbReference type="KEGG" id="afu:AF_1052"/>
<dbReference type="eggNOG" id="arCOG01822">
    <property type="taxonomic scope" value="Archaea"/>
</dbReference>
<dbReference type="HOGENOM" id="CLU_108339_0_0_2"/>
<dbReference type="OrthoDB" id="135845at2157"/>
<dbReference type="PhylomeDB" id="O29210"/>
<dbReference type="Proteomes" id="UP000002199">
    <property type="component" value="Chromosome"/>
</dbReference>
<dbReference type="GO" id="GO:0005198">
    <property type="term" value="F:structural molecule activity"/>
    <property type="evidence" value="ECO:0007669"/>
    <property type="project" value="InterPro"/>
</dbReference>
<dbReference type="GO" id="GO:0097588">
    <property type="term" value="P:archaeal or bacterial-type flagellum-dependent cell motility"/>
    <property type="evidence" value="ECO:0007669"/>
    <property type="project" value="InterPro"/>
</dbReference>
<dbReference type="InterPro" id="IPR002774">
    <property type="entry name" value="Flagellin_arc"/>
</dbReference>
<dbReference type="Pfam" id="PF01917">
    <property type="entry name" value="Arch_flagellin"/>
    <property type="match status" value="1"/>
</dbReference>
<sequence length="162" mass="18043">MAREVISTSILMIATVVAVTAAIMVILPAVKDLAHSYTSVSGNLNEKVETDIEIIFVKVTGDATKVNVYFWVKNTGSTRLDADLVRMSDIFFTSSTTYLHFTGSDTGVTFTIENGDGDEYWERGETLKVAVENIDANQMPQDEYLLTFVLYNGVRANDYFSW</sequence>
<keyword id="KW-1185">Reference proteome</keyword>
<keyword id="KW-0732">Signal</keyword>
<feature type="signal peptide" evidence="1">
    <location>
        <begin position="1"/>
        <end position="34"/>
    </location>
</feature>
<feature type="chain" id="PRO_0000013651" description="Uncharacterized protein AF_1052">
    <location>
        <begin position="35"/>
        <end position="162"/>
    </location>
</feature>
<organism>
    <name type="scientific">Archaeoglobus fulgidus (strain ATCC 49558 / DSM 4304 / JCM 9628 / NBRC 100126 / VC-16)</name>
    <dbReference type="NCBI Taxonomy" id="224325"/>
    <lineage>
        <taxon>Archaea</taxon>
        <taxon>Methanobacteriati</taxon>
        <taxon>Methanobacteriota</taxon>
        <taxon>Archaeoglobi</taxon>
        <taxon>Archaeoglobales</taxon>
        <taxon>Archaeoglobaceae</taxon>
        <taxon>Archaeoglobus</taxon>
    </lineage>
</organism>
<protein>
    <recommendedName>
        <fullName>Uncharacterized protein AF_1052</fullName>
    </recommendedName>
</protein>
<evidence type="ECO:0000255" key="1"/>
<reference key="1">
    <citation type="journal article" date="1997" name="Nature">
        <title>The complete genome sequence of the hyperthermophilic, sulphate-reducing archaeon Archaeoglobus fulgidus.</title>
        <authorList>
            <person name="Klenk H.-P."/>
            <person name="Clayton R.A."/>
            <person name="Tomb J.-F."/>
            <person name="White O."/>
            <person name="Nelson K.E."/>
            <person name="Ketchum K.A."/>
            <person name="Dodson R.J."/>
            <person name="Gwinn M.L."/>
            <person name="Hickey E.K."/>
            <person name="Peterson J.D."/>
            <person name="Richardson D.L."/>
            <person name="Kerlavage A.R."/>
            <person name="Graham D.E."/>
            <person name="Kyrpides N.C."/>
            <person name="Fleischmann R.D."/>
            <person name="Quackenbush J."/>
            <person name="Lee N.H."/>
            <person name="Sutton G.G."/>
            <person name="Gill S.R."/>
            <person name="Kirkness E.F."/>
            <person name="Dougherty B.A."/>
            <person name="McKenney K."/>
            <person name="Adams M.D."/>
            <person name="Loftus B.J."/>
            <person name="Peterson S.N."/>
            <person name="Reich C.I."/>
            <person name="McNeil L.K."/>
            <person name="Badger J.H."/>
            <person name="Glodek A."/>
            <person name="Zhou L."/>
            <person name="Overbeek R."/>
            <person name="Gocayne J.D."/>
            <person name="Weidman J.F."/>
            <person name="McDonald L.A."/>
            <person name="Utterback T.R."/>
            <person name="Cotton M.D."/>
            <person name="Spriggs T."/>
            <person name="Artiach P."/>
            <person name="Kaine B.P."/>
            <person name="Sykes S.M."/>
            <person name="Sadow P.W."/>
            <person name="D'Andrea K.P."/>
            <person name="Bowman C."/>
            <person name="Fujii C."/>
            <person name="Garland S.A."/>
            <person name="Mason T.M."/>
            <person name="Olsen G.J."/>
            <person name="Fraser C.M."/>
            <person name="Smith H.O."/>
            <person name="Woese C.R."/>
            <person name="Venter J.C."/>
        </authorList>
    </citation>
    <scope>NUCLEOTIDE SEQUENCE [LARGE SCALE GENOMIC DNA]</scope>
    <source>
        <strain>ATCC 49558 / DSM 4304 / JCM 9628 / NBRC 100126 / VC-16</strain>
    </source>
</reference>